<dbReference type="EMBL" id="X55298">
    <property type="protein sequence ID" value="CAB56805.1"/>
    <property type="molecule type" value="mRNA"/>
</dbReference>
<dbReference type="EMBL" id="BC060556">
    <property type="protein sequence ID" value="AAH60556.1"/>
    <property type="molecule type" value="mRNA"/>
</dbReference>
<dbReference type="PIR" id="JN0065">
    <property type="entry name" value="JN0065"/>
</dbReference>
<dbReference type="RefSeq" id="NP_113886.1">
    <property type="nucleotide sequence ID" value="NM_031698.1"/>
</dbReference>
<dbReference type="SMR" id="P25235"/>
<dbReference type="BioGRID" id="249196">
    <property type="interactions" value="3"/>
</dbReference>
<dbReference type="FunCoup" id="P25235">
    <property type="interactions" value="3358"/>
</dbReference>
<dbReference type="IntAct" id="P25235">
    <property type="interactions" value="4"/>
</dbReference>
<dbReference type="MINT" id="P25235"/>
<dbReference type="STRING" id="10116.ENSRNOP00000063207"/>
<dbReference type="GlyCosmos" id="P25235">
    <property type="glycosylation" value="1 site, No reported glycans"/>
</dbReference>
<dbReference type="GlyGen" id="P25235">
    <property type="glycosylation" value="2 sites, 1 O-linked glycan (1 site)"/>
</dbReference>
<dbReference type="iPTMnet" id="P25235"/>
<dbReference type="PhosphoSitePlus" id="P25235"/>
<dbReference type="SwissPalm" id="P25235"/>
<dbReference type="jPOST" id="P25235"/>
<dbReference type="PaxDb" id="10116-ENSRNOP00000063207"/>
<dbReference type="Ensembl" id="ENSRNOT00000118622.1">
    <property type="protein sequence ID" value="ENSRNOP00000076455.1"/>
    <property type="gene ID" value="ENSRNOG00000007492.8"/>
</dbReference>
<dbReference type="GeneID" id="64701"/>
<dbReference type="KEGG" id="rno:64701"/>
<dbReference type="UCSC" id="RGD:62075">
    <property type="organism name" value="rat"/>
</dbReference>
<dbReference type="AGR" id="RGD:62075"/>
<dbReference type="CTD" id="6185"/>
<dbReference type="RGD" id="62075">
    <property type="gene designation" value="Rpn2"/>
</dbReference>
<dbReference type="eggNOG" id="KOG2447">
    <property type="taxonomic scope" value="Eukaryota"/>
</dbReference>
<dbReference type="GeneTree" id="ENSGT00390000002635"/>
<dbReference type="HOGENOM" id="CLU_017104_0_0_1"/>
<dbReference type="InParanoid" id="P25235"/>
<dbReference type="OrthoDB" id="432292at2759"/>
<dbReference type="PhylomeDB" id="P25235"/>
<dbReference type="UniPathway" id="UPA00378"/>
<dbReference type="PRO" id="PR:P25235"/>
<dbReference type="Proteomes" id="UP000002494">
    <property type="component" value="Chromosome 3"/>
</dbReference>
<dbReference type="Bgee" id="ENSRNOG00000007492">
    <property type="expression patterns" value="Expressed in pancreas and 20 other cell types or tissues"/>
</dbReference>
<dbReference type="ExpressionAtlas" id="P25235">
    <property type="expression patterns" value="baseline and differential"/>
</dbReference>
<dbReference type="GO" id="GO:0000421">
    <property type="term" value="C:autophagosome membrane"/>
    <property type="evidence" value="ECO:0000314"/>
    <property type="project" value="RGD"/>
</dbReference>
<dbReference type="GO" id="GO:0008250">
    <property type="term" value="C:oligosaccharyltransferase complex"/>
    <property type="evidence" value="ECO:0000266"/>
    <property type="project" value="RGD"/>
</dbReference>
<dbReference type="GO" id="GO:0160226">
    <property type="term" value="C:oligosaccharyltransferase complex A"/>
    <property type="evidence" value="ECO:0000266"/>
    <property type="project" value="RGD"/>
</dbReference>
<dbReference type="GO" id="GO:0160227">
    <property type="term" value="C:oligosaccharyltransferase complex B"/>
    <property type="evidence" value="ECO:0000266"/>
    <property type="project" value="RGD"/>
</dbReference>
<dbReference type="GO" id="GO:0043022">
    <property type="term" value="F:ribosome binding"/>
    <property type="evidence" value="ECO:0000314"/>
    <property type="project" value="RGD"/>
</dbReference>
<dbReference type="GO" id="GO:0006486">
    <property type="term" value="P:protein glycosylation"/>
    <property type="evidence" value="ECO:0000266"/>
    <property type="project" value="RGD"/>
</dbReference>
<dbReference type="GO" id="GO:0006487">
    <property type="term" value="P:protein N-linked glycosylation"/>
    <property type="evidence" value="ECO:0000266"/>
    <property type="project" value="RGD"/>
</dbReference>
<dbReference type="GO" id="GO:0009410">
    <property type="term" value="P:response to xenobiotic stimulus"/>
    <property type="evidence" value="ECO:0000270"/>
    <property type="project" value="RGD"/>
</dbReference>
<dbReference type="InterPro" id="IPR055375">
    <property type="entry name" value="Ribophorin_II_2nd"/>
</dbReference>
<dbReference type="InterPro" id="IPR055374">
    <property type="entry name" value="Ribophorin_II_3rd"/>
</dbReference>
<dbReference type="InterPro" id="IPR056790">
    <property type="entry name" value="Ribophorin_II_C"/>
</dbReference>
<dbReference type="InterPro" id="IPR055373">
    <property type="entry name" value="Ribophorin_II_N"/>
</dbReference>
<dbReference type="InterPro" id="IPR008814">
    <property type="entry name" value="Swp1"/>
</dbReference>
<dbReference type="PANTHER" id="PTHR12640:SF0">
    <property type="entry name" value="DOLICHYL-DIPHOSPHOOLIGOSACCHARIDE--PROTEIN GLYCOSYLTRANSFERASE SUBUNIT 2"/>
    <property type="match status" value="1"/>
</dbReference>
<dbReference type="PANTHER" id="PTHR12640">
    <property type="entry name" value="RIBOPHORIN II"/>
    <property type="match status" value="1"/>
</dbReference>
<dbReference type="Pfam" id="PF05817">
    <property type="entry name" value="Ribophorin_II"/>
    <property type="match status" value="1"/>
</dbReference>
<dbReference type="Pfam" id="PF23861">
    <property type="entry name" value="Ribophorin_II_2nd"/>
    <property type="match status" value="1"/>
</dbReference>
<dbReference type="Pfam" id="PF23860">
    <property type="entry name" value="Ribophorin_II_3rd"/>
    <property type="match status" value="1"/>
</dbReference>
<dbReference type="Pfam" id="PF25147">
    <property type="entry name" value="Ribophorin_II_C"/>
    <property type="match status" value="1"/>
</dbReference>
<accession>P25235</accession>
<accession>Q6P9X0</accession>
<protein>
    <recommendedName>
        <fullName evidence="5">Dolichyl-diphosphooligosaccharide--protein glycosyltransferase subunit 2</fullName>
    </recommendedName>
    <alternativeName>
        <fullName>Dolichyl-diphosphooligosaccharide--protein glycosyltransferase 63 kDa subunit</fullName>
    </alternativeName>
    <alternativeName>
        <fullName>Ribophorin II</fullName>
        <shortName>RPN-II</shortName>
    </alternativeName>
    <alternativeName>
        <fullName>Ribophorin-2</fullName>
    </alternativeName>
</protein>
<gene>
    <name evidence="6" type="primary">Rpn2</name>
</gene>
<feature type="signal peptide">
    <location>
        <begin position="1"/>
        <end position="22"/>
    </location>
</feature>
<feature type="chain" id="PRO_0000022245" description="Dolichyl-diphosphooligosaccharide--protein glycosyltransferase subunit 2">
    <location>
        <begin position="23"/>
        <end position="631"/>
    </location>
</feature>
<feature type="topological domain" description="Lumenal" evidence="4">
    <location>
        <begin position="23"/>
        <end position="540"/>
    </location>
</feature>
<feature type="transmembrane region" description="Helical" evidence="4">
    <location>
        <begin position="541"/>
        <end position="561"/>
    </location>
</feature>
<feature type="topological domain" description="Cytoplasmic" evidence="4">
    <location>
        <begin position="562"/>
        <end position="571"/>
    </location>
</feature>
<feature type="transmembrane region" description="Helical" evidence="4">
    <location>
        <begin position="572"/>
        <end position="592"/>
    </location>
</feature>
<feature type="topological domain" description="Lumenal" evidence="4">
    <location>
        <begin position="593"/>
        <end position="596"/>
    </location>
</feature>
<feature type="transmembrane region" description="Helical" evidence="4">
    <location>
        <begin position="597"/>
        <end position="617"/>
    </location>
</feature>
<feature type="topological domain" description="Cytoplasmic" evidence="4">
    <location>
        <begin position="618"/>
        <end position="631"/>
    </location>
</feature>
<feature type="glycosylation site" description="N-linked (GlcNAc...) asparagine" evidence="5">
    <location>
        <position position="106"/>
    </location>
</feature>
<feature type="cross-link" description="Glycyl lysine isopeptide (Lys-Gly) (interchain with G-Cter in ubiquitin)" evidence="2">
    <location>
        <position position="154"/>
    </location>
</feature>
<feature type="sequence conflict" description="In Ref. 1; CAB56805." evidence="5" ref="1">
    <original>QP</original>
    <variation>HA</variation>
    <location>
        <begin position="298"/>
        <end position="299"/>
    </location>
</feature>
<feature type="sequence conflict" description="In Ref. 1; CAB56805." evidence="5" ref="1">
    <original>V</original>
    <variation>A</variation>
    <location>
        <position position="378"/>
    </location>
</feature>
<feature type="sequence conflict" description="In Ref. 1; CAB56805." evidence="5" ref="1">
    <original>A</original>
    <variation>P</variation>
    <location>
        <position position="390"/>
    </location>
</feature>
<feature type="sequence conflict" description="In Ref. 1; CAB56805." evidence="5" ref="1">
    <original>Y</original>
    <variation>H</variation>
    <location>
        <position position="459"/>
    </location>
</feature>
<feature type="sequence conflict" description="In Ref. 1; CAB56805." evidence="5" ref="1">
    <original>STV</original>
    <variation>TTI</variation>
    <location>
        <begin position="575"/>
        <end position="577"/>
    </location>
</feature>
<evidence type="ECO:0000250" key="1">
    <source>
        <dbReference type="UniProtKB" id="F1PCT7"/>
    </source>
</evidence>
<evidence type="ECO:0000250" key="2">
    <source>
        <dbReference type="UniProtKB" id="P04844"/>
    </source>
</evidence>
<evidence type="ECO:0000250" key="3">
    <source>
        <dbReference type="UniProtKB" id="Q9DBG6"/>
    </source>
</evidence>
<evidence type="ECO:0000255" key="4"/>
<evidence type="ECO:0000305" key="5"/>
<evidence type="ECO:0000312" key="6">
    <source>
        <dbReference type="RGD" id="62075"/>
    </source>
</evidence>
<name>RPN2_RAT</name>
<comment type="function">
    <text evidence="1">Subunit of the oligosaccharyl transferase (OST) complex that catalyzes the initial transfer of a defined glycan (Glc(3)Man(9)GlcNAc(2) in eukaryotes) from the lipid carrier dolichol-pyrophosphate to an asparagine residue within an Asn-X-Ser/Thr consensus motif in nascent polypeptide chains, the first step in protein N-glycosylation. N-glycosylation occurs cotranslationally and the complex associates with the Sec61 complex at the channel-forming translocon complex that mediates protein translocation across the endoplasmic reticulum (ER). All subunits are required for a maximal enzyme activity.</text>
</comment>
<comment type="pathway">
    <text evidence="2">Protein modification; protein glycosylation.</text>
</comment>
<comment type="subunit">
    <text evidence="1 2 3">Component of the oligosaccharyltransferase (OST) complex (By similarity). OST exists in two different complex forms which contain common core subunits RPN1, RPN2, OST48, OST4, DAD1 and TMEM258, either STT3A or STT3B as catalytic subunits, and form-specific accessory subunits (By similarity). STT3A complex assembly occurs through the formation of 3 subcomplexes. Subcomplex 1 contains RPN1 and TMEM258, subcomplex 2 contains the STT3A-specific subunits STT3A, DC2/OSTC, and KCP2 as well as the core subunit OST4, and subcomplex 3 contains RPN2, DAD1, and OST48. The STT3A complex can form stable complexes with the Sec61 complex or with both the Sec61 and TRAP complexes. Interacts with DDI2 (By similarity). Interacts with TMEM35A/NACHO (By similarity).</text>
</comment>
<comment type="subcellular location">
    <subcellularLocation>
        <location evidence="1">Endoplasmic reticulum</location>
    </subcellularLocation>
    <subcellularLocation>
        <location>Endoplasmic reticulum membrane</location>
        <topology evidence="5">Multi-pass membrane protein</topology>
    </subcellularLocation>
</comment>
<comment type="similarity">
    <text evidence="5">Belongs to the SWP1 family.</text>
</comment>
<sequence>MAPPGSSAVFLLALTITASTQALTPTHYLTKHDVERLKASLDRPFTSLESAFYSIVGLNSLGAQVPDVKKACAFIKSNLDPSNVDSLFYAAQSSQVLSGCEISVSNETRDLLLAAVSEDSSVAQIYHAVAALSGFGLPLASHEALGALTARLSKEETVLATVQALHTASHLSQQADLRNIVEEIEDLVARLDELGGVYLQFEEGLELTALFVAATYKLMDHVGTEPSIKEDQVIQLMNTIFSKKNFESLSEAFSVASAAAALSQNRYHVPVVVVPEGSASDTQEQAILRLQVSSVLSQPLAQAAVKLEHAKSVASRATVLQKMPFSLVGDVFELNFKNVKLPSGYYDFSVRVEGDNRYIANTVELRVKISTEVGITNVDLSTVDKDQSIAPKTTRVTYPAKAKGTFIADSHQNFALFFQLVDVNTGAELTPHQTFVRLHNQKTGQEVVFVAEPDNKNVYKFELDTSERKIEFDSASGTYTLYLIIGDATLKNPILWNVADVVIKFPEEEAPSTVLSQNLFTPKQEIQHLFREPEKRPPTVVSNTFTALILSPLLLLFALWIRIGANVSNFTFAPSTVIFHLGHAAMLGLMYVYWTQLNMFQTLKYLAVLGTVTFLAGNRMLAQQAVKRTAH</sequence>
<keyword id="KW-0256">Endoplasmic reticulum</keyword>
<keyword id="KW-0325">Glycoprotein</keyword>
<keyword id="KW-1017">Isopeptide bond</keyword>
<keyword id="KW-0472">Membrane</keyword>
<keyword id="KW-1185">Reference proteome</keyword>
<keyword id="KW-0732">Signal</keyword>
<keyword id="KW-0812">Transmembrane</keyword>
<keyword id="KW-1133">Transmembrane helix</keyword>
<keyword id="KW-0832">Ubl conjugation</keyword>
<proteinExistence type="evidence at transcript level"/>
<organism>
    <name type="scientific">Rattus norvegicus</name>
    <name type="common">Rat</name>
    <dbReference type="NCBI Taxonomy" id="10116"/>
    <lineage>
        <taxon>Eukaryota</taxon>
        <taxon>Metazoa</taxon>
        <taxon>Chordata</taxon>
        <taxon>Craniata</taxon>
        <taxon>Vertebrata</taxon>
        <taxon>Euteleostomi</taxon>
        <taxon>Mammalia</taxon>
        <taxon>Eutheria</taxon>
        <taxon>Euarchontoglires</taxon>
        <taxon>Glires</taxon>
        <taxon>Rodentia</taxon>
        <taxon>Myomorpha</taxon>
        <taxon>Muroidea</taxon>
        <taxon>Muridae</taxon>
        <taxon>Murinae</taxon>
        <taxon>Rattus</taxon>
    </lineage>
</organism>
<reference key="1">
    <citation type="journal article" date="1991" name="Biochem. Biophys. Res. Commun.">
        <title>Rat ribophorin II: molecular cloning and chromosomal localization of a highly conserved transmembrane glycoprotein of the rough endoplasmic reticulum.</title>
        <authorList>
            <person name="Pirozzi G."/>
            <person name="Zhou Z."/>
            <person name="D'Eustachio P."/>
            <person name="Sabatini D.D."/>
            <person name="Kreibich G."/>
        </authorList>
    </citation>
    <scope>NUCLEOTIDE SEQUENCE [MRNA]</scope>
</reference>
<reference key="2">
    <citation type="journal article" date="2004" name="Genome Res.">
        <title>The status, quality, and expansion of the NIH full-length cDNA project: the Mammalian Gene Collection (MGC).</title>
        <authorList>
            <consortium name="The MGC Project Team"/>
        </authorList>
    </citation>
    <scope>NUCLEOTIDE SEQUENCE [LARGE SCALE MRNA]</scope>
    <source>
        <tissue>Pituitary</tissue>
    </source>
</reference>